<protein>
    <recommendedName>
        <fullName>Actin-regulating kinase 1</fullName>
        <ecNumber>2.7.11.1</ecNumber>
    </recommendedName>
</protein>
<name>ARK1_YEAST</name>
<keyword id="KW-0002">3D-structure</keyword>
<keyword id="KW-0067">ATP-binding</keyword>
<keyword id="KW-0963">Cytoplasm</keyword>
<keyword id="KW-0206">Cytoskeleton</keyword>
<keyword id="KW-0418">Kinase</keyword>
<keyword id="KW-0547">Nucleotide-binding</keyword>
<keyword id="KW-0597">Phosphoprotein</keyword>
<keyword id="KW-1185">Reference proteome</keyword>
<keyword id="KW-0723">Serine/threonine-protein kinase</keyword>
<keyword id="KW-0808">Transferase</keyword>
<feature type="chain" id="PRO_0000085635" description="Actin-regulating kinase 1">
    <location>
        <begin position="1"/>
        <end position="638"/>
    </location>
</feature>
<feature type="domain" description="Protein kinase" evidence="1">
    <location>
        <begin position="22"/>
        <end position="298"/>
    </location>
</feature>
<feature type="region of interest" description="Disordered" evidence="3">
    <location>
        <begin position="482"/>
        <end position="518"/>
    </location>
</feature>
<feature type="region of interest" description="Disordered" evidence="3">
    <location>
        <begin position="569"/>
        <end position="638"/>
    </location>
</feature>
<feature type="region of interest" description="Interaction with SH3 domain of ABP1">
    <location>
        <begin position="602"/>
        <end position="615"/>
    </location>
</feature>
<feature type="compositionally biased region" description="Polar residues" evidence="3">
    <location>
        <begin position="482"/>
        <end position="515"/>
    </location>
</feature>
<feature type="compositionally biased region" description="Basic and acidic residues" evidence="3">
    <location>
        <begin position="582"/>
        <end position="593"/>
    </location>
</feature>
<feature type="active site" description="Proton acceptor" evidence="1 2">
    <location>
        <position position="159"/>
    </location>
</feature>
<feature type="binding site" evidence="1">
    <location>
        <begin position="28"/>
        <end position="36"/>
    </location>
    <ligand>
        <name>ATP</name>
        <dbReference type="ChEBI" id="CHEBI:30616"/>
    </ligand>
</feature>
<feature type="binding site" evidence="1">
    <location>
        <position position="56"/>
    </location>
    <ligand>
        <name>ATP</name>
        <dbReference type="ChEBI" id="CHEBI:30616"/>
    </ligand>
</feature>
<feature type="modified residue" description="Phosphoserine" evidence="9 10">
    <location>
        <position position="478"/>
    </location>
</feature>
<feature type="modified residue" description="Phosphoserine" evidence="10">
    <location>
        <position position="522"/>
    </location>
</feature>
<feature type="modified residue" description="Phosphoserine" evidence="10 11">
    <location>
        <position position="535"/>
    </location>
</feature>
<feature type="mutagenesis site" description="Abolishes protein kinase activity." evidence="4">
    <original>K</original>
    <variation>A</variation>
    <location>
        <position position="56"/>
    </location>
</feature>
<evidence type="ECO:0000255" key="1">
    <source>
        <dbReference type="PROSITE-ProRule" id="PRU00159"/>
    </source>
</evidence>
<evidence type="ECO:0000255" key="2">
    <source>
        <dbReference type="PROSITE-ProRule" id="PRU10027"/>
    </source>
</evidence>
<evidence type="ECO:0000256" key="3">
    <source>
        <dbReference type="SAM" id="MobiDB-lite"/>
    </source>
</evidence>
<evidence type="ECO:0000269" key="4">
    <source>
    </source>
</evidence>
<evidence type="ECO:0000269" key="5">
    <source>
    </source>
</evidence>
<evidence type="ECO:0000269" key="6">
    <source>
    </source>
</evidence>
<evidence type="ECO:0000269" key="7">
    <source>
    </source>
</evidence>
<evidence type="ECO:0000269" key="8">
    <source>
    </source>
</evidence>
<evidence type="ECO:0007744" key="9">
    <source>
    </source>
</evidence>
<evidence type="ECO:0007744" key="10">
    <source>
    </source>
</evidence>
<evidence type="ECO:0007744" key="11">
    <source>
    </source>
</evidence>
<accession>P53974</accession>
<accession>D6W1F9</accession>
<sequence>MNQPQIGTYNVGTQLTVGSHQVEIIKYLTSGGFAQVYSALINPPDPHSNSSVACLKRVIVPDKPSLNTLRAEVDAMRLLKNNRYVVSYIDSHAAKAMLHNGSYEVFVLMEYCERGGLIDFMNTRLQNRLHEFEILQIMSQVTQGVAAMHALQPPLIHRDIKIENVLISANNEYKLCDFGSVCGIIRPPRNSQELSYVQQDILKNTTAQYRSPEMIDTFRGLPIDEKSDIWALGIFLYKLCYYTTPFEKGGDLAILSGKFEFPLYPNYSEQLKGLIRDILVQDPRHRPNVYQLLKRISIMQNVPCPINDIQVVQAPSSHLNLTELHQLSATQNILSLNSPTTMENTMPNATFQISMADNTTTAQMHPNRKPSQIAYDASFSNSAKGSQPLFDKSQNMYHALDPPLVEPLASSVSNNDNELKANSATKLKQAIVSEAHTFRQNNSIDFPLQNIIPQYEDSSSSSDESYSGDVDELKKTRSLGSYSTRGNIKKNQSVKESLTSSSLPGTSFTPTSTKVNLKHENSPFKSTFVNTIDNSKDDLNKPSYEDLDVSKQNLKNSIQQRMIDKLNSSEESFNARKMSKVKLHEKGEIDKPTMLKSSGPISKDKKTKPTPPPKPSHLKPKPPPKPLLLAGRKLSLDK</sequence>
<organism>
    <name type="scientific">Saccharomyces cerevisiae (strain ATCC 204508 / S288c)</name>
    <name type="common">Baker's yeast</name>
    <dbReference type="NCBI Taxonomy" id="559292"/>
    <lineage>
        <taxon>Eukaryota</taxon>
        <taxon>Fungi</taxon>
        <taxon>Dikarya</taxon>
        <taxon>Ascomycota</taxon>
        <taxon>Saccharomycotina</taxon>
        <taxon>Saccharomycetes</taxon>
        <taxon>Saccharomycetales</taxon>
        <taxon>Saccharomycetaceae</taxon>
        <taxon>Saccharomyces</taxon>
    </lineage>
</organism>
<dbReference type="EC" id="2.7.11.1"/>
<dbReference type="EMBL" id="Z71296">
    <property type="protein sequence ID" value="CAA95882.1"/>
    <property type="molecule type" value="Genomic_DNA"/>
</dbReference>
<dbReference type="EMBL" id="BK006947">
    <property type="protein sequence ID" value="DAA10525.1"/>
    <property type="molecule type" value="Genomic_DNA"/>
</dbReference>
<dbReference type="PIR" id="S62932">
    <property type="entry name" value="S62932"/>
</dbReference>
<dbReference type="RefSeq" id="NP_014378.1">
    <property type="nucleotide sequence ID" value="NM_001182859.1"/>
</dbReference>
<dbReference type="PDB" id="2RPN">
    <property type="method" value="NMR"/>
    <property type="chains" value="B=605-621"/>
</dbReference>
<dbReference type="PDBsum" id="2RPN"/>
<dbReference type="BMRB" id="P53974"/>
<dbReference type="SMR" id="P53974"/>
<dbReference type="BioGRID" id="35806">
    <property type="interactions" value="163"/>
</dbReference>
<dbReference type="DIP" id="DIP-4381N"/>
<dbReference type="FunCoup" id="P53974">
    <property type="interactions" value="335"/>
</dbReference>
<dbReference type="IntAct" id="P53974">
    <property type="interactions" value="19"/>
</dbReference>
<dbReference type="MINT" id="P53974"/>
<dbReference type="STRING" id="4932.YNL020C"/>
<dbReference type="GlyGen" id="P53974">
    <property type="glycosylation" value="3 sites, 1 O-linked glycan (2 sites)"/>
</dbReference>
<dbReference type="iPTMnet" id="P53974"/>
<dbReference type="PaxDb" id="4932-YNL020C"/>
<dbReference type="PeptideAtlas" id="P53974"/>
<dbReference type="EnsemblFungi" id="YNL020C_mRNA">
    <property type="protein sequence ID" value="YNL020C"/>
    <property type="gene ID" value="YNL020C"/>
</dbReference>
<dbReference type="GeneID" id="855711"/>
<dbReference type="KEGG" id="sce:YNL020C"/>
<dbReference type="AGR" id="SGD:S000004965"/>
<dbReference type="SGD" id="S000004965">
    <property type="gene designation" value="ARK1"/>
</dbReference>
<dbReference type="VEuPathDB" id="FungiDB:YNL020C"/>
<dbReference type="eggNOG" id="KOG1989">
    <property type="taxonomic scope" value="Eukaryota"/>
</dbReference>
<dbReference type="GeneTree" id="ENSGT00940000176643"/>
<dbReference type="HOGENOM" id="CLU_011638_3_0_1"/>
<dbReference type="InParanoid" id="P53974"/>
<dbReference type="OMA" id="PLPEMWV"/>
<dbReference type="OrthoDB" id="2018507at2759"/>
<dbReference type="BioCyc" id="YEAST:G3O-33058-MONOMER"/>
<dbReference type="BioGRID-ORCS" id="855711">
    <property type="hits" value="0 hits in 13 CRISPR screens"/>
</dbReference>
<dbReference type="PRO" id="PR:P53974"/>
<dbReference type="Proteomes" id="UP000002311">
    <property type="component" value="Chromosome XIV"/>
</dbReference>
<dbReference type="RNAct" id="P53974">
    <property type="molecule type" value="protein"/>
</dbReference>
<dbReference type="GO" id="GO:0030479">
    <property type="term" value="C:actin cortical patch"/>
    <property type="evidence" value="ECO:0000314"/>
    <property type="project" value="SGD"/>
</dbReference>
<dbReference type="GO" id="GO:0005737">
    <property type="term" value="C:cytoplasm"/>
    <property type="evidence" value="ECO:0000318"/>
    <property type="project" value="GO_Central"/>
</dbReference>
<dbReference type="GO" id="GO:0043332">
    <property type="term" value="C:mating projection tip"/>
    <property type="evidence" value="ECO:0007005"/>
    <property type="project" value="SGD"/>
</dbReference>
<dbReference type="GO" id="GO:0005524">
    <property type="term" value="F:ATP binding"/>
    <property type="evidence" value="ECO:0007669"/>
    <property type="project" value="UniProtKB-KW"/>
</dbReference>
<dbReference type="GO" id="GO:0004672">
    <property type="term" value="F:protein kinase activity"/>
    <property type="evidence" value="ECO:0007005"/>
    <property type="project" value="SGD"/>
</dbReference>
<dbReference type="GO" id="GO:0106310">
    <property type="term" value="F:protein serine kinase activity"/>
    <property type="evidence" value="ECO:0007669"/>
    <property type="project" value="RHEA"/>
</dbReference>
<dbReference type="GO" id="GO:0004674">
    <property type="term" value="F:protein serine/threonine kinase activity"/>
    <property type="evidence" value="ECO:0000314"/>
    <property type="project" value="SGD"/>
</dbReference>
<dbReference type="GO" id="GO:0000147">
    <property type="term" value="P:actin cortical patch assembly"/>
    <property type="evidence" value="ECO:0000318"/>
    <property type="project" value="GO_Central"/>
</dbReference>
<dbReference type="GO" id="GO:0007015">
    <property type="term" value="P:actin filament organization"/>
    <property type="evidence" value="ECO:0000315"/>
    <property type="project" value="SGD"/>
</dbReference>
<dbReference type="GO" id="GO:2000369">
    <property type="term" value="P:regulation of clathrin-dependent endocytosis"/>
    <property type="evidence" value="ECO:0000315"/>
    <property type="project" value="SGD"/>
</dbReference>
<dbReference type="CDD" id="cd14037">
    <property type="entry name" value="STKc_NAK_like"/>
    <property type="match status" value="1"/>
</dbReference>
<dbReference type="FunFam" id="1.10.510.10:FF:000441">
    <property type="entry name" value="Serine/threonine protein kinase"/>
    <property type="match status" value="1"/>
</dbReference>
<dbReference type="Gene3D" id="1.10.510.10">
    <property type="entry name" value="Transferase(Phosphotransferase) domain 1"/>
    <property type="match status" value="1"/>
</dbReference>
<dbReference type="InterPro" id="IPR011009">
    <property type="entry name" value="Kinase-like_dom_sf"/>
</dbReference>
<dbReference type="InterPro" id="IPR000719">
    <property type="entry name" value="Prot_kinase_dom"/>
</dbReference>
<dbReference type="InterPro" id="IPR008271">
    <property type="entry name" value="Ser/Thr_kinase_AS"/>
</dbReference>
<dbReference type="PANTHER" id="PTHR22967:SF57">
    <property type="entry name" value="AUXILIN, ISOFORM A-RELATED"/>
    <property type="match status" value="1"/>
</dbReference>
<dbReference type="PANTHER" id="PTHR22967">
    <property type="entry name" value="SERINE/THREONINE PROTEIN KINASE"/>
    <property type="match status" value="1"/>
</dbReference>
<dbReference type="Pfam" id="PF00069">
    <property type="entry name" value="Pkinase"/>
    <property type="match status" value="1"/>
</dbReference>
<dbReference type="SMART" id="SM00220">
    <property type="entry name" value="S_TKc"/>
    <property type="match status" value="1"/>
</dbReference>
<dbReference type="SUPFAM" id="SSF56112">
    <property type="entry name" value="Protein kinase-like (PK-like)"/>
    <property type="match status" value="1"/>
</dbReference>
<dbReference type="PROSITE" id="PS50011">
    <property type="entry name" value="PROTEIN_KINASE_DOM"/>
    <property type="match status" value="1"/>
</dbReference>
<dbReference type="PROSITE" id="PS00108">
    <property type="entry name" value="PROTEIN_KINASE_ST"/>
    <property type="match status" value="1"/>
</dbReference>
<comment type="function">
    <text evidence="4 6">Involved in regulation of actin cytoskeleton organization and endocytosis.</text>
</comment>
<comment type="catalytic activity">
    <reaction>
        <text>L-seryl-[protein] + ATP = O-phospho-L-seryl-[protein] + ADP + H(+)</text>
        <dbReference type="Rhea" id="RHEA:17989"/>
        <dbReference type="Rhea" id="RHEA-COMP:9863"/>
        <dbReference type="Rhea" id="RHEA-COMP:11604"/>
        <dbReference type="ChEBI" id="CHEBI:15378"/>
        <dbReference type="ChEBI" id="CHEBI:29999"/>
        <dbReference type="ChEBI" id="CHEBI:30616"/>
        <dbReference type="ChEBI" id="CHEBI:83421"/>
        <dbReference type="ChEBI" id="CHEBI:456216"/>
        <dbReference type="EC" id="2.7.11.1"/>
    </reaction>
</comment>
<comment type="catalytic activity">
    <reaction>
        <text>L-threonyl-[protein] + ATP = O-phospho-L-threonyl-[protein] + ADP + H(+)</text>
        <dbReference type="Rhea" id="RHEA:46608"/>
        <dbReference type="Rhea" id="RHEA-COMP:11060"/>
        <dbReference type="Rhea" id="RHEA-COMP:11605"/>
        <dbReference type="ChEBI" id="CHEBI:15378"/>
        <dbReference type="ChEBI" id="CHEBI:30013"/>
        <dbReference type="ChEBI" id="CHEBI:30616"/>
        <dbReference type="ChEBI" id="CHEBI:61977"/>
        <dbReference type="ChEBI" id="CHEBI:456216"/>
        <dbReference type="EC" id="2.7.11.1"/>
    </reaction>
</comment>
<comment type="subunit">
    <text evidence="5">Interacts with ABP1, which is required for proper actin patch localization.</text>
</comment>
<comment type="interaction">
    <interactant intactId="EBI-9817">
        <id>P53974</id>
    </interactant>
    <interactant intactId="EBI-2036">
        <id>P15891</id>
        <label>ABP1</label>
    </interactant>
    <organismsDiffer>false</organismsDiffer>
    <experiments>13</experiments>
</comment>
<comment type="subcellular location">
    <subcellularLocation>
        <location evidence="4 7">Cytoplasm</location>
        <location evidence="4 7">Cytoskeleton</location>
        <location evidence="4 7">Actin patch</location>
    </subcellularLocation>
    <text>Cortical actin patches.</text>
</comment>
<comment type="miscellaneous">
    <text evidence="8">Present with 1551 molecules/cell in log phase SD medium.</text>
</comment>
<comment type="similarity">
    <text evidence="1">Belongs to the protein kinase superfamily. Ser/Thr protein kinase family.</text>
</comment>
<proteinExistence type="evidence at protein level"/>
<gene>
    <name type="primary">ARK1</name>
    <name type="ordered locus">YNL020C</name>
    <name type="ORF">N2823</name>
</gene>
<reference key="1">
    <citation type="journal article" date="1997" name="Nature">
        <title>The nucleotide sequence of Saccharomyces cerevisiae chromosome XIV and its evolutionary implications.</title>
        <authorList>
            <person name="Philippsen P."/>
            <person name="Kleine K."/>
            <person name="Poehlmann R."/>
            <person name="Duesterhoeft A."/>
            <person name="Hamberg K."/>
            <person name="Hegemann J.H."/>
            <person name="Obermaier B."/>
            <person name="Urrestarazu L.A."/>
            <person name="Aert R."/>
            <person name="Albermann K."/>
            <person name="Altmann R."/>
            <person name="Andre B."/>
            <person name="Baladron V."/>
            <person name="Ballesta J.P.G."/>
            <person name="Becam A.-M."/>
            <person name="Beinhauer J.D."/>
            <person name="Boskovic J."/>
            <person name="Buitrago M.J."/>
            <person name="Bussereau F."/>
            <person name="Coster F."/>
            <person name="Crouzet M."/>
            <person name="D'Angelo M."/>
            <person name="Dal Pero F."/>
            <person name="De Antoni A."/>
            <person name="del Rey F."/>
            <person name="Doignon F."/>
            <person name="Domdey H."/>
            <person name="Dubois E."/>
            <person name="Fiedler T.A."/>
            <person name="Fleig U."/>
            <person name="Floeth M."/>
            <person name="Fritz C."/>
            <person name="Gaillardin C."/>
            <person name="Garcia-Cantalejo J.M."/>
            <person name="Glansdorff N."/>
            <person name="Goffeau A."/>
            <person name="Gueldener U."/>
            <person name="Herbert C.J."/>
            <person name="Heumann K."/>
            <person name="Heuss-Neitzel D."/>
            <person name="Hilbert H."/>
            <person name="Hinni K."/>
            <person name="Iraqui Houssaini I."/>
            <person name="Jacquet M."/>
            <person name="Jimenez A."/>
            <person name="Jonniaux J.-L."/>
            <person name="Karpfinger-Hartl L."/>
            <person name="Lanfranchi G."/>
            <person name="Lepingle A."/>
            <person name="Levesque H."/>
            <person name="Lyck R."/>
            <person name="Maftahi M."/>
            <person name="Mallet L."/>
            <person name="Maurer C.T.C."/>
            <person name="Messenguy F."/>
            <person name="Mewes H.-W."/>
            <person name="Moestl D."/>
            <person name="Nasr F."/>
            <person name="Nicaud J.-M."/>
            <person name="Niedenthal R.K."/>
            <person name="Pandolfo D."/>
            <person name="Pierard A."/>
            <person name="Piravandi E."/>
            <person name="Planta R.J."/>
            <person name="Pohl T.M."/>
            <person name="Purnelle B."/>
            <person name="Rebischung C."/>
            <person name="Remacha M.A."/>
            <person name="Revuelta J.L."/>
            <person name="Rinke M."/>
            <person name="Saiz J.E."/>
            <person name="Sartorello F."/>
            <person name="Scherens B."/>
            <person name="Sen-Gupta M."/>
            <person name="Soler-Mira A."/>
            <person name="Urbanus J.H.M."/>
            <person name="Valle G."/>
            <person name="Van Dyck L."/>
            <person name="Verhasselt P."/>
            <person name="Vierendeels F."/>
            <person name="Vissers S."/>
            <person name="Voet M."/>
            <person name="Volckaert G."/>
            <person name="Wach A."/>
            <person name="Wambutt R."/>
            <person name="Wedler H."/>
            <person name="Zollner A."/>
            <person name="Hani J."/>
        </authorList>
    </citation>
    <scope>NUCLEOTIDE SEQUENCE [LARGE SCALE GENOMIC DNA]</scope>
    <source>
        <strain>ATCC 204508 / S288c</strain>
    </source>
</reference>
<reference key="2">
    <citation type="journal article" date="2014" name="G3 (Bethesda)">
        <title>The reference genome sequence of Saccharomyces cerevisiae: Then and now.</title>
        <authorList>
            <person name="Engel S.R."/>
            <person name="Dietrich F.S."/>
            <person name="Fisk D.G."/>
            <person name="Binkley G."/>
            <person name="Balakrishnan R."/>
            <person name="Costanzo M.C."/>
            <person name="Dwight S.S."/>
            <person name="Hitz B.C."/>
            <person name="Karra K."/>
            <person name="Nash R.S."/>
            <person name="Weng S."/>
            <person name="Wong E.D."/>
            <person name="Lloyd P."/>
            <person name="Skrzypek M.S."/>
            <person name="Miyasato S.R."/>
            <person name="Simison M."/>
            <person name="Cherry J.M."/>
        </authorList>
    </citation>
    <scope>GENOME REANNOTATION</scope>
    <source>
        <strain>ATCC 204508 / S288c</strain>
    </source>
</reference>
<reference key="3">
    <citation type="journal article" date="1999" name="J. Cell Biol.">
        <title>Novel protein kinases Ark1p and Prk1p associate with and regulate the cortical actin cytoskeleton in budding yeast.</title>
        <authorList>
            <person name="Cope M.J.T.V."/>
            <person name="Yang S."/>
            <person name="Shang C."/>
            <person name="Drubin D.G."/>
        </authorList>
    </citation>
    <scope>FUNCTION</scope>
    <scope>SUBCELLULAR LOCATION</scope>
    <scope>MUTAGENESIS OF LYS-56</scope>
</reference>
<reference key="4">
    <citation type="journal article" date="2001" name="Mol. Biol. Cell">
        <title>In vivo role for actin-regulating kinases in endocytosis and yeast epsin phosphorylation.</title>
        <authorList>
            <person name="Watson H.A."/>
            <person name="Cope M.J.T.V."/>
            <person name="Groen A.C."/>
            <person name="Drubin D.G."/>
            <person name="Wendland B."/>
        </authorList>
    </citation>
    <scope>FUNCTION</scope>
</reference>
<reference key="5">
    <citation type="journal article" date="2002" name="J. Biol. Chem.">
        <title>Unusual binding properties of the SH3 domain of the yeast actin-binding protein Abp1: structural and functional analysis.</title>
        <authorList>
            <person name="Fazi B."/>
            <person name="Cope M.J.T.V."/>
            <person name="Douangamath A."/>
            <person name="Ferracuti S."/>
            <person name="Schirwitz K."/>
            <person name="Zucconi A."/>
            <person name="Drubin D.G."/>
            <person name="Wilmanns M."/>
            <person name="Cesareni G."/>
            <person name="Castagnoli L."/>
        </authorList>
    </citation>
    <scope>INTERACTION WITH ABP1</scope>
</reference>
<reference key="6">
    <citation type="journal article" date="2003" name="Nature">
        <title>Global analysis of protein localization in budding yeast.</title>
        <authorList>
            <person name="Huh W.-K."/>
            <person name="Falvo J.V."/>
            <person name="Gerke L.C."/>
            <person name="Carroll A.S."/>
            <person name="Howson R.W."/>
            <person name="Weissman J.S."/>
            <person name="O'Shea E.K."/>
        </authorList>
    </citation>
    <scope>SUBCELLULAR LOCATION [LARGE SCALE ANALYSIS]</scope>
</reference>
<reference key="7">
    <citation type="journal article" date="2003" name="Nature">
        <title>Global analysis of protein expression in yeast.</title>
        <authorList>
            <person name="Ghaemmaghami S."/>
            <person name="Huh W.-K."/>
            <person name="Bower K."/>
            <person name="Howson R.W."/>
            <person name="Belle A."/>
            <person name="Dephoure N."/>
            <person name="O'Shea E.K."/>
            <person name="Weissman J.S."/>
        </authorList>
    </citation>
    <scope>LEVEL OF PROTEIN EXPRESSION [LARGE SCALE ANALYSIS]</scope>
</reference>
<reference key="8">
    <citation type="journal article" date="2007" name="Proc. Natl. Acad. Sci. U.S.A.">
        <title>Analysis of phosphorylation sites on proteins from Saccharomyces cerevisiae by electron transfer dissociation (ETD) mass spectrometry.</title>
        <authorList>
            <person name="Chi A."/>
            <person name="Huttenhower C."/>
            <person name="Geer L.Y."/>
            <person name="Coon J.J."/>
            <person name="Syka J.E.P."/>
            <person name="Bai D.L."/>
            <person name="Shabanowitz J."/>
            <person name="Burke D.J."/>
            <person name="Troyanskaya O.G."/>
            <person name="Hunt D.F."/>
        </authorList>
    </citation>
    <scope>PHOSPHORYLATION [LARGE SCALE ANALYSIS] AT SER-478</scope>
    <scope>IDENTIFICATION BY MASS SPECTROMETRY [LARGE SCALE ANALYSIS]</scope>
</reference>
<reference key="9">
    <citation type="journal article" date="2008" name="Mol. Cell. Proteomics">
        <title>A multidimensional chromatography technology for in-depth phosphoproteome analysis.</title>
        <authorList>
            <person name="Albuquerque C.P."/>
            <person name="Smolka M.B."/>
            <person name="Payne S.H."/>
            <person name="Bafna V."/>
            <person name="Eng J."/>
            <person name="Zhou H."/>
        </authorList>
    </citation>
    <scope>PHOSPHORYLATION [LARGE SCALE ANALYSIS] AT SER-478; SER-522 AND SER-535</scope>
    <scope>IDENTIFICATION BY MASS SPECTROMETRY [LARGE SCALE ANALYSIS]</scope>
</reference>
<reference key="10">
    <citation type="journal article" date="2009" name="Science">
        <title>Global analysis of Cdk1 substrate phosphorylation sites provides insights into evolution.</title>
        <authorList>
            <person name="Holt L.J."/>
            <person name="Tuch B.B."/>
            <person name="Villen J."/>
            <person name="Johnson A.D."/>
            <person name="Gygi S.P."/>
            <person name="Morgan D.O."/>
        </authorList>
    </citation>
    <scope>PHOSPHORYLATION [LARGE SCALE ANALYSIS] AT SER-535</scope>
    <scope>IDENTIFICATION BY MASS SPECTROMETRY [LARGE SCALE ANALYSIS]</scope>
</reference>